<reference key="1">
    <citation type="submission" date="2004-11" db="EMBL/GenBank/DDBJ databases">
        <authorList>
            <consortium name="The German cDNA consortium"/>
        </authorList>
    </citation>
    <scope>NUCLEOTIDE SEQUENCE [LARGE SCALE MRNA]</scope>
    <source>
        <tissue>Brain cortex</tissue>
    </source>
</reference>
<name>CLDN1_PONAB</name>
<protein>
    <recommendedName>
        <fullName>Claudin domain-containing protein 1</fullName>
    </recommendedName>
    <alternativeName>
        <fullName evidence="1">Claudin-25</fullName>
    </alternativeName>
</protein>
<evidence type="ECO:0000250" key="1">
    <source>
        <dbReference type="UniProtKB" id="Q9NY35"/>
    </source>
</evidence>
<evidence type="ECO:0000255" key="2"/>
<evidence type="ECO:0000305" key="3"/>
<sequence>MDNRFATAFVIACVLSLISTIYMAASIGTDFWYEYRSPVQENSSDLNKSIWDEFISDEADEKTYNDALFRYNGTVGLWRRCITIPKNMHWYSPPERTESFDVVTKCVSFTLTEQFMEKFVDPGNHNSGIDLLRTYLWRCQFLLPFVSLGLMCFGALIGLCACICRSLYPTIATGILHLLAGLCTLGSVSCYVAGIELLHQKLELPDNVSGEFGWSFCLACVSAPLQFMASALFIWAAHTNRKEYTLMKAYRVA</sequence>
<organism>
    <name type="scientific">Pongo abelii</name>
    <name type="common">Sumatran orangutan</name>
    <name type="synonym">Pongo pygmaeus abelii</name>
    <dbReference type="NCBI Taxonomy" id="9601"/>
    <lineage>
        <taxon>Eukaryota</taxon>
        <taxon>Metazoa</taxon>
        <taxon>Chordata</taxon>
        <taxon>Craniata</taxon>
        <taxon>Vertebrata</taxon>
        <taxon>Euteleostomi</taxon>
        <taxon>Mammalia</taxon>
        <taxon>Eutheria</taxon>
        <taxon>Euarchontoglires</taxon>
        <taxon>Primates</taxon>
        <taxon>Haplorrhini</taxon>
        <taxon>Catarrhini</taxon>
        <taxon>Hominidae</taxon>
        <taxon>Pongo</taxon>
    </lineage>
</organism>
<feature type="chain" id="PRO_0000273424" description="Claudin domain-containing protein 1">
    <location>
        <begin position="1"/>
        <end position="253"/>
    </location>
</feature>
<feature type="transmembrane region" description="Helical" evidence="2">
    <location>
        <begin position="5"/>
        <end position="25"/>
    </location>
</feature>
<feature type="transmembrane region" description="Helical" evidence="2">
    <location>
        <begin position="141"/>
        <end position="161"/>
    </location>
</feature>
<feature type="transmembrane region" description="Helical" evidence="2">
    <location>
        <begin position="175"/>
        <end position="195"/>
    </location>
</feature>
<feature type="transmembrane region" description="Helical" evidence="2">
    <location>
        <begin position="216"/>
        <end position="236"/>
    </location>
</feature>
<feature type="glycosylation site" description="N-linked (GlcNAc...) asparagine" evidence="2">
    <location>
        <position position="42"/>
    </location>
</feature>
<feature type="glycosylation site" description="N-linked (GlcNAc...) asparagine" evidence="2">
    <location>
        <position position="72"/>
    </location>
</feature>
<feature type="sequence conflict" description="In Ref. 1; CAH93189." evidence="3" ref="1">
    <original>A</original>
    <variation>V</variation>
    <location>
        <position position="161"/>
    </location>
</feature>
<keyword id="KW-0965">Cell junction</keyword>
<keyword id="KW-1003">Cell membrane</keyword>
<keyword id="KW-0325">Glycoprotein</keyword>
<keyword id="KW-0472">Membrane</keyword>
<keyword id="KW-1185">Reference proteome</keyword>
<keyword id="KW-0796">Tight junction</keyword>
<keyword id="KW-0812">Transmembrane</keyword>
<keyword id="KW-1133">Transmembrane helix</keyword>
<proteinExistence type="evidence at transcript level"/>
<dbReference type="EMBL" id="CR857787">
    <property type="protein sequence ID" value="CAH90050.1"/>
    <property type="molecule type" value="mRNA"/>
</dbReference>
<dbReference type="EMBL" id="CR859505">
    <property type="protein sequence ID" value="CAH91674.1"/>
    <property type="status" value="ALT_INIT"/>
    <property type="molecule type" value="mRNA"/>
</dbReference>
<dbReference type="EMBL" id="CR861112">
    <property type="protein sequence ID" value="CAH93189.1"/>
    <property type="molecule type" value="mRNA"/>
</dbReference>
<dbReference type="RefSeq" id="NP_001127451.1">
    <property type="nucleotide sequence ID" value="NM_001133979.1"/>
</dbReference>
<dbReference type="RefSeq" id="NP_001128766.1">
    <property type="nucleotide sequence ID" value="NM_001135294.2"/>
</dbReference>
<dbReference type="RefSeq" id="NP_001417372.1">
    <property type="nucleotide sequence ID" value="NM_001430443.1"/>
</dbReference>
<dbReference type="RefSeq" id="NP_001417373.1">
    <property type="nucleotide sequence ID" value="NM_001430444.1"/>
</dbReference>
<dbReference type="RefSeq" id="XP_009236929.1">
    <property type="nucleotide sequence ID" value="XM_009238654.1"/>
</dbReference>
<dbReference type="RefSeq" id="XP_009236930.1">
    <property type="nucleotide sequence ID" value="XM_009238655.1"/>
</dbReference>
<dbReference type="RefSeq" id="XP_009236931.1">
    <property type="nucleotide sequence ID" value="XM_009238656.1"/>
</dbReference>
<dbReference type="FunCoup" id="Q5RDV7">
    <property type="interactions" value="506"/>
</dbReference>
<dbReference type="STRING" id="9601.ENSPPYP00000015220"/>
<dbReference type="GlyCosmos" id="Q5RDV7">
    <property type="glycosylation" value="2 sites, No reported glycans"/>
</dbReference>
<dbReference type="GeneID" id="100174522"/>
<dbReference type="KEGG" id="pon:100174522"/>
<dbReference type="CTD" id="56650"/>
<dbReference type="eggNOG" id="ENOG502QRAV">
    <property type="taxonomic scope" value="Eukaryota"/>
</dbReference>
<dbReference type="HOGENOM" id="CLU_071844_0_0_1"/>
<dbReference type="InParanoid" id="Q5RDV7"/>
<dbReference type="OrthoDB" id="9885915at2759"/>
<dbReference type="TreeFam" id="TF331244"/>
<dbReference type="Proteomes" id="UP000001595">
    <property type="component" value="Chromosome 3"/>
</dbReference>
<dbReference type="GO" id="GO:0016020">
    <property type="term" value="C:membrane"/>
    <property type="evidence" value="ECO:0007669"/>
    <property type="project" value="UniProtKB-SubCell"/>
</dbReference>
<dbReference type="FunFam" id="1.20.140.150:FF:000009">
    <property type="entry name" value="Claudin domain-containing protein 1"/>
    <property type="match status" value="1"/>
</dbReference>
<dbReference type="Gene3D" id="1.20.140.150">
    <property type="match status" value="1"/>
</dbReference>
<dbReference type="InterPro" id="IPR042356">
    <property type="entry name" value="CLDN1"/>
</dbReference>
<dbReference type="InterPro" id="IPR004031">
    <property type="entry name" value="PMP22/EMP/MP20/Claudin"/>
</dbReference>
<dbReference type="PANTHER" id="PTHR14347">
    <property type="entry name" value="CLAUDIN DOMAIN-CONTAINING PROTEIN 1"/>
    <property type="match status" value="1"/>
</dbReference>
<dbReference type="PANTHER" id="PTHR14347:SF3">
    <property type="entry name" value="CLAUDIN DOMAIN-CONTAINING PROTEIN 1"/>
    <property type="match status" value="1"/>
</dbReference>
<dbReference type="Pfam" id="PF13903">
    <property type="entry name" value="Claudin_2"/>
    <property type="match status" value="1"/>
</dbReference>
<gene>
    <name type="primary">CLDND1</name>
</gene>
<accession>Q5RDV7</accession>
<accession>Q5R4X7</accession>
<accession>Q5R986</accession>
<comment type="function">
    <text evidence="1">Plays a role in negatively regulating the permeability of cells to small molecules.</text>
</comment>
<comment type="subcellular location">
    <subcellularLocation>
        <location evidence="1">Cell junction</location>
        <location evidence="1">Tight junction</location>
    </subcellularLocation>
    <subcellularLocation>
        <location evidence="3">Cell membrane</location>
        <topology evidence="2">Multi-pass membrane protein</topology>
    </subcellularLocation>
</comment>
<comment type="domain">
    <text evidence="1">The C-terminal region is required for localization to tight junctions which occurs in a TJP1/ZO1-independent manner.</text>
</comment>
<comment type="similarity">
    <text evidence="3">Belongs to the PMP-22/EMP/MP20 family.</text>
</comment>
<comment type="sequence caution" evidence="3">
    <conflict type="erroneous initiation">
        <sequence resource="EMBL-CDS" id="CAH91674"/>
    </conflict>
</comment>